<protein>
    <recommendedName>
        <fullName>pH-response regulator protein palH/prr-4</fullName>
    </recommendedName>
</protein>
<comment type="function">
    <text evidence="1">Required for the proteolytic cleavage of the transcription factor pacc-1 in response to alkaline ambient pH.</text>
</comment>
<comment type="subcellular location">
    <subcellularLocation>
        <location evidence="1">Cell membrane</location>
        <topology evidence="1">Multi-pass membrane protein</topology>
    </subcellularLocation>
</comment>
<comment type="similarity">
    <text evidence="4">Belongs to the palH/RIM21 family.</text>
</comment>
<sequence length="778" mass="83992">MEPRQLFSDPTADPISTAGAASNALSCASFNLPEGGILQLPNGEIITLSAPAAFKPPSCNLALRSVPNIIASGGVVGGTASGTMGLKADDDSHFSDWRDPFYASTFPQCYALAATTIIAYTLVIMLFITPRSFLDGGVVVLGRKGFTNGGGGTSIGGRPWLQKVAALSVAISLTIANAATFRAAEQQYSWGVQNAKQLQEDVLGGAELKIIRIISDTFLWLAQAQTLIRLFPRQREKVIIKWTAFALITLDVIFQSLNSFKYGGSDLTRPKFTEAVPALSYLFALALGVLYAAWVLYYSIMKKRYAFYHPLMKNMILVAVLSVVSILVPVVFFILDISKPDFAGWGDYVRWVGAAAASVIVWEWVERIEALEREEKKDGILGREVFDGDEMLEASQSEHAWPKMKRKGSGGSDSQDTESGGGGKDGGPSLSRFGAWSKISTLTSKHRTEPSSRNEPNEGSSPVAETTNDDERPRFLSPPLWPARPTPAATPVSRTDTTSAASTMYAVRYHTMTELTSYGTPPPTRNMGRLSGSESRGSSRHRDYGSASPGSAPAQDARSTQNSHVGAKASSAGSRWHALTPTVSSRDFVTRSEPRSSKMQRDENSRWDLRARVEEFAATQAENLREKFRPTLDTNNLPVTVIPAPPRRGAAIAQLCEEEELNHSSREGTVREESRNSNASGTVIAVGGAQTPIQTSFSPPPRAANSSMSTAQMPRPQLSPIVTQGSFTNNRYNHLPVTVIPAPPRQDPARAPSQPQSPSLVALGKQPARSDSSTTPSP</sequence>
<name>PALH_NEUCR</name>
<feature type="chain" id="PRO_0000058203" description="pH-response regulator protein palH/prr-4">
    <location>
        <begin position="1"/>
        <end position="778"/>
    </location>
</feature>
<feature type="topological domain" description="Extracellular" evidence="2">
    <location>
        <begin position="1"/>
        <end position="108"/>
    </location>
</feature>
<feature type="transmembrane region" description="Helical" evidence="2">
    <location>
        <begin position="109"/>
        <end position="129"/>
    </location>
</feature>
<feature type="topological domain" description="Periplasmic" evidence="2">
    <location>
        <begin position="130"/>
        <end position="160"/>
    </location>
</feature>
<feature type="transmembrane region" description="Helical" evidence="2">
    <location>
        <begin position="161"/>
        <end position="181"/>
    </location>
</feature>
<feature type="topological domain" description="Extracellular" evidence="2">
    <location>
        <begin position="182"/>
        <end position="201"/>
    </location>
</feature>
<feature type="transmembrane region" description="Helical" evidence="2">
    <location>
        <begin position="202"/>
        <end position="222"/>
    </location>
</feature>
<feature type="topological domain" description="Periplasmic" evidence="2">
    <location>
        <begin position="223"/>
        <end position="237"/>
    </location>
</feature>
<feature type="transmembrane region" description="Helical" evidence="2">
    <location>
        <begin position="238"/>
        <end position="258"/>
    </location>
</feature>
<feature type="topological domain" description="Extracellular" evidence="2">
    <location>
        <begin position="259"/>
        <end position="275"/>
    </location>
</feature>
<feature type="transmembrane region" description="Helical" evidence="2">
    <location>
        <begin position="276"/>
        <end position="296"/>
    </location>
</feature>
<feature type="topological domain" description="Periplasmic" evidence="2">
    <location>
        <begin position="297"/>
        <end position="314"/>
    </location>
</feature>
<feature type="transmembrane region" description="Helical" evidence="2">
    <location>
        <begin position="315"/>
        <end position="335"/>
    </location>
</feature>
<feature type="topological domain" description="Extracellular" evidence="2">
    <location>
        <begin position="336"/>
        <end position="341"/>
    </location>
</feature>
<feature type="transmembrane region" description="Helical" evidence="2">
    <location>
        <begin position="342"/>
        <end position="362"/>
    </location>
</feature>
<feature type="topological domain" description="Periplasmic" evidence="2">
    <location>
        <begin position="363"/>
        <end position="778"/>
    </location>
</feature>
<feature type="region of interest" description="Disordered" evidence="3">
    <location>
        <begin position="394"/>
        <end position="499"/>
    </location>
</feature>
<feature type="region of interest" description="Disordered" evidence="3">
    <location>
        <begin position="514"/>
        <end position="605"/>
    </location>
</feature>
<feature type="region of interest" description="Disordered" evidence="3">
    <location>
        <begin position="660"/>
        <end position="778"/>
    </location>
</feature>
<feature type="compositionally biased region" description="Basic and acidic residues" evidence="3">
    <location>
        <begin position="446"/>
        <end position="456"/>
    </location>
</feature>
<feature type="compositionally biased region" description="Polar residues" evidence="3">
    <location>
        <begin position="457"/>
        <end position="466"/>
    </location>
</feature>
<feature type="compositionally biased region" description="Basic and acidic residues" evidence="3">
    <location>
        <begin position="588"/>
        <end position="605"/>
    </location>
</feature>
<feature type="compositionally biased region" description="Basic and acidic residues" evidence="3">
    <location>
        <begin position="661"/>
        <end position="675"/>
    </location>
</feature>
<feature type="compositionally biased region" description="Polar residues" evidence="3">
    <location>
        <begin position="720"/>
        <end position="732"/>
    </location>
</feature>
<feature type="compositionally biased region" description="Low complexity" evidence="3">
    <location>
        <begin position="749"/>
        <end position="759"/>
    </location>
</feature>
<feature type="compositionally biased region" description="Polar residues" evidence="3">
    <location>
        <begin position="769"/>
        <end position="778"/>
    </location>
</feature>
<reference key="1">
    <citation type="journal article" date="2003" name="Nature">
        <title>The genome sequence of the filamentous fungus Neurospora crassa.</title>
        <authorList>
            <person name="Galagan J.E."/>
            <person name="Calvo S.E."/>
            <person name="Borkovich K.A."/>
            <person name="Selker E.U."/>
            <person name="Read N.D."/>
            <person name="Jaffe D.B."/>
            <person name="FitzHugh W."/>
            <person name="Ma L.-J."/>
            <person name="Smirnov S."/>
            <person name="Purcell S."/>
            <person name="Rehman B."/>
            <person name="Elkins T."/>
            <person name="Engels R."/>
            <person name="Wang S."/>
            <person name="Nielsen C.B."/>
            <person name="Butler J."/>
            <person name="Endrizzi M."/>
            <person name="Qui D."/>
            <person name="Ianakiev P."/>
            <person name="Bell-Pedersen D."/>
            <person name="Nelson M.A."/>
            <person name="Werner-Washburne M."/>
            <person name="Selitrennikoff C.P."/>
            <person name="Kinsey J.A."/>
            <person name="Braun E.L."/>
            <person name="Zelter A."/>
            <person name="Schulte U."/>
            <person name="Kothe G.O."/>
            <person name="Jedd G."/>
            <person name="Mewes H.-W."/>
            <person name="Staben C."/>
            <person name="Marcotte E."/>
            <person name="Greenberg D."/>
            <person name="Roy A."/>
            <person name="Foley K."/>
            <person name="Naylor J."/>
            <person name="Stange-Thomann N."/>
            <person name="Barrett R."/>
            <person name="Gnerre S."/>
            <person name="Kamal M."/>
            <person name="Kamvysselis M."/>
            <person name="Mauceli E.W."/>
            <person name="Bielke C."/>
            <person name="Rudd S."/>
            <person name="Frishman D."/>
            <person name="Krystofova S."/>
            <person name="Rasmussen C."/>
            <person name="Metzenberg R.L."/>
            <person name="Perkins D.D."/>
            <person name="Kroken S."/>
            <person name="Cogoni C."/>
            <person name="Macino G."/>
            <person name="Catcheside D.E.A."/>
            <person name="Li W."/>
            <person name="Pratt R.J."/>
            <person name="Osmani S.A."/>
            <person name="DeSouza C.P.C."/>
            <person name="Glass N.L."/>
            <person name="Orbach M.J."/>
            <person name="Berglund J.A."/>
            <person name="Voelker R."/>
            <person name="Yarden O."/>
            <person name="Plamann M."/>
            <person name="Seiler S."/>
            <person name="Dunlap J.C."/>
            <person name="Radford A."/>
            <person name="Aramayo R."/>
            <person name="Natvig D.O."/>
            <person name="Alex L.A."/>
            <person name="Mannhaupt G."/>
            <person name="Ebbole D.J."/>
            <person name="Freitag M."/>
            <person name="Paulsen I."/>
            <person name="Sachs M.S."/>
            <person name="Lander E.S."/>
            <person name="Nusbaum C."/>
            <person name="Birren B.W."/>
        </authorList>
    </citation>
    <scope>NUCLEOTIDE SEQUENCE [LARGE SCALE GENOMIC DNA]</scope>
    <source>
        <strain>ATCC 24698 / 74-OR23-1A / CBS 708.71 / DSM 1257 / FGSC 987</strain>
    </source>
</reference>
<dbReference type="EMBL" id="CM002238">
    <property type="protein sequence ID" value="EAA27758.1"/>
    <property type="molecule type" value="Genomic_DNA"/>
</dbReference>
<dbReference type="RefSeq" id="XP_956994.1">
    <property type="nucleotide sequence ID" value="XM_951901.2"/>
</dbReference>
<dbReference type="STRING" id="367110.Q7RY98"/>
<dbReference type="PaxDb" id="5141-EFNCRP00000000319"/>
<dbReference type="EnsemblFungi" id="EAA27758">
    <property type="protein sequence ID" value="EAA27758"/>
    <property type="gene ID" value="NCU00007"/>
</dbReference>
<dbReference type="GeneID" id="3873170"/>
<dbReference type="KEGG" id="ncr:NCU00007"/>
<dbReference type="VEuPathDB" id="FungiDB:NCU00007"/>
<dbReference type="HOGENOM" id="CLU_014594_1_0_1"/>
<dbReference type="InParanoid" id="Q7RY98"/>
<dbReference type="OrthoDB" id="5393256at2759"/>
<dbReference type="Proteomes" id="UP000001805">
    <property type="component" value="Chromosome 3, Linkage Group III"/>
</dbReference>
<dbReference type="GO" id="GO:0005886">
    <property type="term" value="C:plasma membrane"/>
    <property type="evidence" value="ECO:0000318"/>
    <property type="project" value="GO_Central"/>
</dbReference>
<dbReference type="GO" id="GO:0071467">
    <property type="term" value="P:cellular response to pH"/>
    <property type="evidence" value="ECO:0000318"/>
    <property type="project" value="GO_Central"/>
</dbReference>
<dbReference type="InterPro" id="IPR014844">
    <property type="entry name" value="PalH"/>
</dbReference>
<dbReference type="PANTHER" id="PTHR35779">
    <property type="entry name" value="PH-RESPONSE REGULATOR PROTEIN PALH/RIM21"/>
    <property type="match status" value="1"/>
</dbReference>
<dbReference type="PANTHER" id="PTHR35779:SF1">
    <property type="entry name" value="PH-RESPONSE REGULATOR PROTEIN PALH_RIM21"/>
    <property type="match status" value="1"/>
</dbReference>
<dbReference type="Pfam" id="PF08733">
    <property type="entry name" value="PalH"/>
    <property type="match status" value="1"/>
</dbReference>
<organism>
    <name type="scientific">Neurospora crassa (strain ATCC 24698 / 74-OR23-1A / CBS 708.71 / DSM 1257 / FGSC 987)</name>
    <dbReference type="NCBI Taxonomy" id="367110"/>
    <lineage>
        <taxon>Eukaryota</taxon>
        <taxon>Fungi</taxon>
        <taxon>Dikarya</taxon>
        <taxon>Ascomycota</taxon>
        <taxon>Pezizomycotina</taxon>
        <taxon>Sordariomycetes</taxon>
        <taxon>Sordariomycetidae</taxon>
        <taxon>Sordariales</taxon>
        <taxon>Sordariaceae</taxon>
        <taxon>Neurospora</taxon>
    </lineage>
</organism>
<evidence type="ECO:0000250" key="1"/>
<evidence type="ECO:0000255" key="2"/>
<evidence type="ECO:0000256" key="3">
    <source>
        <dbReference type="SAM" id="MobiDB-lite"/>
    </source>
</evidence>
<evidence type="ECO:0000305" key="4"/>
<gene>
    <name type="primary">prr-4</name>
    <name type="synonym">rim21</name>
    <name type="ORF">NCU00007</name>
</gene>
<accession>Q7RY98</accession>
<keyword id="KW-1003">Cell membrane</keyword>
<keyword id="KW-0472">Membrane</keyword>
<keyword id="KW-1185">Reference proteome</keyword>
<keyword id="KW-0812">Transmembrane</keyword>
<keyword id="KW-1133">Transmembrane helix</keyword>
<proteinExistence type="inferred from homology"/>